<dbReference type="EMBL" id="AB056714">
    <property type="protein sequence ID" value="BAB64571.1"/>
    <property type="molecule type" value="mRNA"/>
</dbReference>
<dbReference type="EMBL" id="AF358912">
    <property type="protein sequence ID" value="AAM00238.1"/>
    <property type="molecule type" value="mRNA"/>
</dbReference>
<dbReference type="EMBL" id="AF358914">
    <property type="protein sequence ID" value="AAM00240.1"/>
    <property type="molecule type" value="Genomic_DNA"/>
</dbReference>
<dbReference type="EMBL" id="AAFI02000218">
    <property type="protein sequence ID" value="EAL60577.1"/>
    <property type="molecule type" value="Genomic_DNA"/>
</dbReference>
<dbReference type="RefSeq" id="XP_628986.1">
    <property type="nucleotide sequence ID" value="XM_628984.1"/>
</dbReference>
<dbReference type="SMR" id="Q95YL4"/>
<dbReference type="FunCoup" id="Q95YL4">
    <property type="interactions" value="416"/>
</dbReference>
<dbReference type="STRING" id="44689.Q95YL4"/>
<dbReference type="PaxDb" id="44689-DDB0215364"/>
<dbReference type="EnsemblProtists" id="EAL60577">
    <property type="protein sequence ID" value="EAL60577"/>
    <property type="gene ID" value="DDB_G0293530"/>
</dbReference>
<dbReference type="GeneID" id="8629269"/>
<dbReference type="KEGG" id="ddi:DDB_G0293530"/>
<dbReference type="dictyBase" id="DDB_G0293530">
    <property type="gene designation" value="pefB"/>
</dbReference>
<dbReference type="VEuPathDB" id="AmoebaDB:DDB_G0293530"/>
<dbReference type="eggNOG" id="KOG0037">
    <property type="taxonomic scope" value="Eukaryota"/>
</dbReference>
<dbReference type="HOGENOM" id="CLU_051357_1_1_1"/>
<dbReference type="InParanoid" id="Q95YL4"/>
<dbReference type="OMA" id="TWTPFNI"/>
<dbReference type="PhylomeDB" id="Q95YL4"/>
<dbReference type="PRO" id="PR:Q95YL4"/>
<dbReference type="Proteomes" id="UP000002195">
    <property type="component" value="Chromosome 6"/>
</dbReference>
<dbReference type="GO" id="GO:0005737">
    <property type="term" value="C:cytoplasm"/>
    <property type="evidence" value="ECO:0000314"/>
    <property type="project" value="dictyBase"/>
</dbReference>
<dbReference type="GO" id="GO:0016020">
    <property type="term" value="C:membrane"/>
    <property type="evidence" value="ECO:0000314"/>
    <property type="project" value="dictyBase"/>
</dbReference>
<dbReference type="GO" id="GO:0005634">
    <property type="term" value="C:nucleus"/>
    <property type="evidence" value="ECO:0000314"/>
    <property type="project" value="dictyBase"/>
</dbReference>
<dbReference type="GO" id="GO:0005509">
    <property type="term" value="F:calcium ion binding"/>
    <property type="evidence" value="ECO:0000314"/>
    <property type="project" value="dictyBase"/>
</dbReference>
<dbReference type="GO" id="GO:0048306">
    <property type="term" value="F:calcium-dependent protein binding"/>
    <property type="evidence" value="ECO:0000353"/>
    <property type="project" value="dictyBase"/>
</dbReference>
<dbReference type="GO" id="GO:0030587">
    <property type="term" value="P:sorocarp development"/>
    <property type="evidence" value="ECO:0000316"/>
    <property type="project" value="dictyBase"/>
</dbReference>
<dbReference type="CDD" id="cd16185">
    <property type="entry name" value="EFh_PEF_ALG-2_like"/>
    <property type="match status" value="1"/>
</dbReference>
<dbReference type="Gene3D" id="1.10.238.10">
    <property type="entry name" value="EF-hand"/>
    <property type="match status" value="1"/>
</dbReference>
<dbReference type="InterPro" id="IPR011992">
    <property type="entry name" value="EF-hand-dom_pair"/>
</dbReference>
<dbReference type="InterPro" id="IPR018247">
    <property type="entry name" value="EF_Hand_1_Ca_BS"/>
</dbReference>
<dbReference type="InterPro" id="IPR002048">
    <property type="entry name" value="EF_hand_dom"/>
</dbReference>
<dbReference type="InterPro" id="IPR051426">
    <property type="entry name" value="Peflin/Sorcin_CaBP"/>
</dbReference>
<dbReference type="PANTHER" id="PTHR46212:SF3">
    <property type="entry name" value="GH27120P"/>
    <property type="match status" value="1"/>
</dbReference>
<dbReference type="PANTHER" id="PTHR46212">
    <property type="entry name" value="PEFLIN"/>
    <property type="match status" value="1"/>
</dbReference>
<dbReference type="Pfam" id="PF13499">
    <property type="entry name" value="EF-hand_7"/>
    <property type="match status" value="1"/>
</dbReference>
<dbReference type="SUPFAM" id="SSF47473">
    <property type="entry name" value="EF-hand"/>
    <property type="match status" value="1"/>
</dbReference>
<dbReference type="PROSITE" id="PS00018">
    <property type="entry name" value="EF_HAND_1"/>
    <property type="match status" value="2"/>
</dbReference>
<dbReference type="PROSITE" id="PS50222">
    <property type="entry name" value="EF_HAND_2"/>
    <property type="match status" value="3"/>
</dbReference>
<comment type="subunit">
    <text evidence="3">In contrast to pefA, does not form homodimers in presence of Ca(2+). May form heterodimers with pefA.</text>
</comment>
<comment type="subcellular location">
    <subcellularLocation>
        <location evidence="2 3">Cytoplasm</location>
    </subcellularLocation>
    <subcellularLocation>
        <location evidence="2 3">Membrane</location>
        <topology>Peripheral membrane protein</topology>
    </subcellularLocation>
    <text evidence="2">Membrane-associated in the presence of Ca(2+).</text>
</comment>
<comment type="developmental stage">
    <text evidence="2 3">Constitutively expressed throughout development (at protein level). Expression peaks at the aggregation stage, decreases at the tipped aggregate and remains low at later stages. Expressed more abundantly in the extreme tip of the prestalk region, slugs and early culminants.</text>
</comment>
<comment type="disruption phenotype">
    <text evidence="3">Cells lacking pefB and mutants lacking both pefA and pefB grow normally in axenic medium or on bacterial lawns, and have no major differentiation defect, apart from the fact that mutants lacking pefB have a stalk base thicker than normal.</text>
</comment>
<comment type="similarity">
    <text evidence="4">Belongs to the Peflin/Sorcin family.</text>
</comment>
<reference key="1">
    <citation type="journal article" date="2001" name="J. Biochem.">
        <title>Identification and characterization of two penta-EF-hand Ca(2+)-binding proteins in Dictyostelium discoideum.</title>
        <authorList>
            <person name="Ohkouchi S."/>
            <person name="Nishio K."/>
            <person name="Maeda M."/>
            <person name="Hitomi K."/>
            <person name="Adachi H."/>
            <person name="Maki M."/>
        </authorList>
    </citation>
    <scope>NUCLEOTIDE SEQUENCE [MRNA]</scope>
    <scope>DEVELOPMENTAL STAGE</scope>
    <scope>SUBCELLULAR LOCATION</scope>
    <source>
        <strain>AX2</strain>
    </source>
</reference>
<reference key="2">
    <citation type="journal article" date="2002" name="J. Biol. Chem.">
        <title>Biochemical characterization of two analogues of the apoptosis-linked gene 2 protein in Dictyostelium discoideum and interaction with a physiological partner in mammals, murine Alix.</title>
        <authorList>
            <person name="Aubry L."/>
            <person name="Mattei S."/>
            <person name="Blot B."/>
            <person name="Sadoul R."/>
            <person name="Satre M."/>
            <person name="Klein G."/>
        </authorList>
    </citation>
    <scope>NUCLEOTIDE SEQUENCE [GENOMIC DNA / MRNA]</scope>
    <scope>SUBUNIT</scope>
    <scope>CALCIUM-BINDING</scope>
    <scope>SUBCELLULAR LOCATION</scope>
    <scope>DEVELOPMENTAL STAGE</scope>
    <scope>DISRUPTION PHENOTYPE</scope>
</reference>
<reference key="3">
    <citation type="journal article" date="2005" name="Nature">
        <title>The genome of the social amoeba Dictyostelium discoideum.</title>
        <authorList>
            <person name="Eichinger L."/>
            <person name="Pachebat J.A."/>
            <person name="Gloeckner G."/>
            <person name="Rajandream M.A."/>
            <person name="Sucgang R."/>
            <person name="Berriman M."/>
            <person name="Song J."/>
            <person name="Olsen R."/>
            <person name="Szafranski K."/>
            <person name="Xu Q."/>
            <person name="Tunggal B."/>
            <person name="Kummerfeld S."/>
            <person name="Madera M."/>
            <person name="Konfortov B.A."/>
            <person name="Rivero F."/>
            <person name="Bankier A.T."/>
            <person name="Lehmann R."/>
            <person name="Hamlin N."/>
            <person name="Davies R."/>
            <person name="Gaudet P."/>
            <person name="Fey P."/>
            <person name="Pilcher K."/>
            <person name="Chen G."/>
            <person name="Saunders D."/>
            <person name="Sodergren E.J."/>
            <person name="Davis P."/>
            <person name="Kerhornou A."/>
            <person name="Nie X."/>
            <person name="Hall N."/>
            <person name="Anjard C."/>
            <person name="Hemphill L."/>
            <person name="Bason N."/>
            <person name="Farbrother P."/>
            <person name="Desany B."/>
            <person name="Just E."/>
            <person name="Morio T."/>
            <person name="Rost R."/>
            <person name="Churcher C.M."/>
            <person name="Cooper J."/>
            <person name="Haydock S."/>
            <person name="van Driessche N."/>
            <person name="Cronin A."/>
            <person name="Goodhead I."/>
            <person name="Muzny D.M."/>
            <person name="Mourier T."/>
            <person name="Pain A."/>
            <person name="Lu M."/>
            <person name="Harper D."/>
            <person name="Lindsay R."/>
            <person name="Hauser H."/>
            <person name="James K.D."/>
            <person name="Quiles M."/>
            <person name="Madan Babu M."/>
            <person name="Saito T."/>
            <person name="Buchrieser C."/>
            <person name="Wardroper A."/>
            <person name="Felder M."/>
            <person name="Thangavelu M."/>
            <person name="Johnson D."/>
            <person name="Knights A."/>
            <person name="Loulseged H."/>
            <person name="Mungall K.L."/>
            <person name="Oliver K."/>
            <person name="Price C."/>
            <person name="Quail M.A."/>
            <person name="Urushihara H."/>
            <person name="Hernandez J."/>
            <person name="Rabbinowitsch E."/>
            <person name="Steffen D."/>
            <person name="Sanders M."/>
            <person name="Ma J."/>
            <person name="Kohara Y."/>
            <person name="Sharp S."/>
            <person name="Simmonds M.N."/>
            <person name="Spiegler S."/>
            <person name="Tivey A."/>
            <person name="Sugano S."/>
            <person name="White B."/>
            <person name="Walker D."/>
            <person name="Woodward J.R."/>
            <person name="Winckler T."/>
            <person name="Tanaka Y."/>
            <person name="Shaulsky G."/>
            <person name="Schleicher M."/>
            <person name="Weinstock G.M."/>
            <person name="Rosenthal A."/>
            <person name="Cox E.C."/>
            <person name="Chisholm R.L."/>
            <person name="Gibbs R.A."/>
            <person name="Loomis W.F."/>
            <person name="Platzer M."/>
            <person name="Kay R.R."/>
            <person name="Williams J.G."/>
            <person name="Dear P.H."/>
            <person name="Noegel A.A."/>
            <person name="Barrell B.G."/>
            <person name="Kuspa A."/>
        </authorList>
    </citation>
    <scope>NUCLEOTIDE SEQUENCE [LARGE SCALE GENOMIC DNA]</scope>
    <source>
        <strain>AX4</strain>
    </source>
</reference>
<protein>
    <recommendedName>
        <fullName>Penta-EF hand domain-containing protein 2</fullName>
    </recommendedName>
    <alternativeName>
        <fullName>Apoptosis-linked gene 2 protein homolog B</fullName>
    </alternativeName>
    <alternativeName>
        <fullName>Dd-ALG-2b</fullName>
    </alternativeName>
    <alternativeName>
        <fullName>DdPEF-2</fullName>
    </alternativeName>
</protein>
<accession>Q95YL4</accession>
<accession>Q54BP3</accession>
<organism>
    <name type="scientific">Dictyostelium discoideum</name>
    <name type="common">Social amoeba</name>
    <dbReference type="NCBI Taxonomy" id="44689"/>
    <lineage>
        <taxon>Eukaryota</taxon>
        <taxon>Amoebozoa</taxon>
        <taxon>Evosea</taxon>
        <taxon>Eumycetozoa</taxon>
        <taxon>Dictyostelia</taxon>
        <taxon>Dictyosteliales</taxon>
        <taxon>Dictyosteliaceae</taxon>
        <taxon>Dictyostelium</taxon>
    </lineage>
</organism>
<sequence>MYGYGYTPAVVAPTVMSFSFVPPQAFQQCWFYSLYTQIQQAQLYEMQSWFMRVDANRSGTISSGELQYLNIGGTPLGIETATKLIKVFDHNKNGQIDFYEYAALHQFINNLYRCFVANDRNFSGTIDANEIYNALITSGFQLPFPTVNYLFLKLSPSGYGLLFTQFLNLCATVALTRSLFEWNDPMRTGVVHLNLAQLYDIIALV</sequence>
<proteinExistence type="evidence at protein level"/>
<feature type="chain" id="PRO_0000328613" description="Penta-EF hand domain-containing protein 2">
    <location>
        <begin position="1"/>
        <end position="205"/>
    </location>
</feature>
<feature type="domain" description="EF-hand 1" evidence="1">
    <location>
        <begin position="45"/>
        <end position="75"/>
    </location>
</feature>
<feature type="domain" description="EF-hand 2" evidence="1">
    <location>
        <begin position="76"/>
        <end position="111"/>
    </location>
</feature>
<feature type="domain" description="EF-hand 3" evidence="1">
    <location>
        <begin position="119"/>
        <end position="141"/>
    </location>
</feature>
<feature type="binding site" evidence="1">
    <location>
        <position position="54"/>
    </location>
    <ligand>
        <name>Ca(2+)</name>
        <dbReference type="ChEBI" id="CHEBI:29108"/>
        <label>1</label>
    </ligand>
</feature>
<feature type="binding site" evidence="1">
    <location>
        <position position="56"/>
    </location>
    <ligand>
        <name>Ca(2+)</name>
        <dbReference type="ChEBI" id="CHEBI:29108"/>
        <label>1</label>
    </ligand>
</feature>
<feature type="binding site" evidence="1">
    <location>
        <position position="58"/>
    </location>
    <ligand>
        <name>Ca(2+)</name>
        <dbReference type="ChEBI" id="CHEBI:29108"/>
        <label>1</label>
    </ligand>
</feature>
<feature type="binding site" evidence="1">
    <location>
        <position position="60"/>
    </location>
    <ligand>
        <name>Ca(2+)</name>
        <dbReference type="ChEBI" id="CHEBI:29108"/>
        <label>1</label>
    </ligand>
</feature>
<feature type="binding site" evidence="1">
    <location>
        <position position="65"/>
    </location>
    <ligand>
        <name>Ca(2+)</name>
        <dbReference type="ChEBI" id="CHEBI:29108"/>
        <label>1</label>
    </ligand>
</feature>
<feature type="binding site" evidence="1">
    <location>
        <position position="89"/>
    </location>
    <ligand>
        <name>Ca(2+)</name>
        <dbReference type="ChEBI" id="CHEBI:29108"/>
        <label>2</label>
    </ligand>
</feature>
<feature type="binding site" evidence="1">
    <location>
        <position position="91"/>
    </location>
    <ligand>
        <name>Ca(2+)</name>
        <dbReference type="ChEBI" id="CHEBI:29108"/>
        <label>2</label>
    </ligand>
</feature>
<feature type="binding site" evidence="1">
    <location>
        <position position="93"/>
    </location>
    <ligand>
        <name>Ca(2+)</name>
        <dbReference type="ChEBI" id="CHEBI:29108"/>
        <label>2</label>
    </ligand>
</feature>
<feature type="binding site" evidence="1">
    <location>
        <position position="95"/>
    </location>
    <ligand>
        <name>Ca(2+)</name>
        <dbReference type="ChEBI" id="CHEBI:29108"/>
        <label>2</label>
    </ligand>
</feature>
<feature type="binding site" evidence="1">
    <location>
        <position position="100"/>
    </location>
    <ligand>
        <name>Ca(2+)</name>
        <dbReference type="ChEBI" id="CHEBI:29108"/>
        <label>2</label>
    </ligand>
</feature>
<keyword id="KW-0106">Calcium</keyword>
<keyword id="KW-0963">Cytoplasm</keyword>
<keyword id="KW-0472">Membrane</keyword>
<keyword id="KW-0479">Metal-binding</keyword>
<keyword id="KW-1185">Reference proteome</keyword>
<keyword id="KW-0677">Repeat</keyword>
<evidence type="ECO:0000255" key="1">
    <source>
        <dbReference type="PROSITE-ProRule" id="PRU00448"/>
    </source>
</evidence>
<evidence type="ECO:0000269" key="2">
    <source>
    </source>
</evidence>
<evidence type="ECO:0000269" key="3">
    <source>
    </source>
</evidence>
<evidence type="ECO:0000305" key="4"/>
<gene>
    <name type="primary">pefB</name>
    <name type="synonym">alg2B</name>
    <name type="ORF">DDB_G0293530</name>
</gene>
<name>PEFB_DICDI</name>